<sequence>MPRRREVPKREILPDPKFGNVEVAKFMNVLMLDGKKSVAERIVYGAFDQIEKKAGKAPIEVFTLAIGNIKPVVEVKSRRVGGANYQVPVEVRPSRRLALAMRWLREAAKKRSEKSMALRLAGELLEASEGRGGAMKKRDEVHRMAEANKAFSHFRF</sequence>
<accession>B2UEM3</accession>
<organism>
    <name type="scientific">Ralstonia pickettii (strain 12J)</name>
    <dbReference type="NCBI Taxonomy" id="402626"/>
    <lineage>
        <taxon>Bacteria</taxon>
        <taxon>Pseudomonadati</taxon>
        <taxon>Pseudomonadota</taxon>
        <taxon>Betaproteobacteria</taxon>
        <taxon>Burkholderiales</taxon>
        <taxon>Burkholderiaceae</taxon>
        <taxon>Ralstonia</taxon>
    </lineage>
</organism>
<proteinExistence type="inferred from homology"/>
<protein>
    <recommendedName>
        <fullName evidence="1">Small ribosomal subunit protein uS7</fullName>
    </recommendedName>
    <alternativeName>
        <fullName evidence="2">30S ribosomal protein S7</fullName>
    </alternativeName>
</protein>
<gene>
    <name evidence="1" type="primary">rpsG</name>
    <name type="ordered locus">Rpic_3301</name>
</gene>
<feature type="chain" id="PRO_1000125988" description="Small ribosomal subunit protein uS7">
    <location>
        <begin position="1"/>
        <end position="156"/>
    </location>
</feature>
<reference key="1">
    <citation type="submission" date="2008-05" db="EMBL/GenBank/DDBJ databases">
        <title>Complete sequence of chromosome 1 of Ralstonia pickettii 12J.</title>
        <authorList>
            <person name="Lucas S."/>
            <person name="Copeland A."/>
            <person name="Lapidus A."/>
            <person name="Glavina del Rio T."/>
            <person name="Dalin E."/>
            <person name="Tice H."/>
            <person name="Bruce D."/>
            <person name="Goodwin L."/>
            <person name="Pitluck S."/>
            <person name="Meincke L."/>
            <person name="Brettin T."/>
            <person name="Detter J.C."/>
            <person name="Han C."/>
            <person name="Kuske C.R."/>
            <person name="Schmutz J."/>
            <person name="Larimer F."/>
            <person name="Land M."/>
            <person name="Hauser L."/>
            <person name="Kyrpides N."/>
            <person name="Mikhailova N."/>
            <person name="Marsh T."/>
            <person name="Richardson P."/>
        </authorList>
    </citation>
    <scope>NUCLEOTIDE SEQUENCE [LARGE SCALE GENOMIC DNA]</scope>
    <source>
        <strain>12J</strain>
    </source>
</reference>
<keyword id="KW-0687">Ribonucleoprotein</keyword>
<keyword id="KW-0689">Ribosomal protein</keyword>
<keyword id="KW-0694">RNA-binding</keyword>
<keyword id="KW-0699">rRNA-binding</keyword>
<keyword id="KW-0820">tRNA-binding</keyword>
<comment type="function">
    <text evidence="1">One of the primary rRNA binding proteins, it binds directly to 16S rRNA where it nucleates assembly of the head domain of the 30S subunit. Is located at the subunit interface close to the decoding center, probably blocks exit of the E-site tRNA.</text>
</comment>
<comment type="subunit">
    <text evidence="1">Part of the 30S ribosomal subunit. Contacts proteins S9 and S11.</text>
</comment>
<comment type="similarity">
    <text evidence="1">Belongs to the universal ribosomal protein uS7 family.</text>
</comment>
<dbReference type="EMBL" id="CP001068">
    <property type="protein sequence ID" value="ACD28423.1"/>
    <property type="molecule type" value="Genomic_DNA"/>
</dbReference>
<dbReference type="SMR" id="B2UEM3"/>
<dbReference type="STRING" id="402626.Rpic_3301"/>
<dbReference type="KEGG" id="rpi:Rpic_3301"/>
<dbReference type="eggNOG" id="COG0049">
    <property type="taxonomic scope" value="Bacteria"/>
</dbReference>
<dbReference type="HOGENOM" id="CLU_072226_1_1_4"/>
<dbReference type="GO" id="GO:0015935">
    <property type="term" value="C:small ribosomal subunit"/>
    <property type="evidence" value="ECO:0007669"/>
    <property type="project" value="InterPro"/>
</dbReference>
<dbReference type="GO" id="GO:0019843">
    <property type="term" value="F:rRNA binding"/>
    <property type="evidence" value="ECO:0007669"/>
    <property type="project" value="UniProtKB-UniRule"/>
</dbReference>
<dbReference type="GO" id="GO:0003735">
    <property type="term" value="F:structural constituent of ribosome"/>
    <property type="evidence" value="ECO:0007669"/>
    <property type="project" value="InterPro"/>
</dbReference>
<dbReference type="GO" id="GO:0000049">
    <property type="term" value="F:tRNA binding"/>
    <property type="evidence" value="ECO:0007669"/>
    <property type="project" value="UniProtKB-UniRule"/>
</dbReference>
<dbReference type="GO" id="GO:0006412">
    <property type="term" value="P:translation"/>
    <property type="evidence" value="ECO:0007669"/>
    <property type="project" value="UniProtKB-UniRule"/>
</dbReference>
<dbReference type="CDD" id="cd14869">
    <property type="entry name" value="uS7_Bacteria"/>
    <property type="match status" value="1"/>
</dbReference>
<dbReference type="FunFam" id="1.10.455.10:FF:000001">
    <property type="entry name" value="30S ribosomal protein S7"/>
    <property type="match status" value="1"/>
</dbReference>
<dbReference type="Gene3D" id="1.10.455.10">
    <property type="entry name" value="Ribosomal protein S7 domain"/>
    <property type="match status" value="1"/>
</dbReference>
<dbReference type="HAMAP" id="MF_00480_B">
    <property type="entry name" value="Ribosomal_uS7_B"/>
    <property type="match status" value="1"/>
</dbReference>
<dbReference type="InterPro" id="IPR000235">
    <property type="entry name" value="Ribosomal_uS7"/>
</dbReference>
<dbReference type="InterPro" id="IPR005717">
    <property type="entry name" value="Ribosomal_uS7_bac/org-type"/>
</dbReference>
<dbReference type="InterPro" id="IPR020606">
    <property type="entry name" value="Ribosomal_uS7_CS"/>
</dbReference>
<dbReference type="InterPro" id="IPR023798">
    <property type="entry name" value="Ribosomal_uS7_dom"/>
</dbReference>
<dbReference type="InterPro" id="IPR036823">
    <property type="entry name" value="Ribosomal_uS7_dom_sf"/>
</dbReference>
<dbReference type="NCBIfam" id="TIGR01029">
    <property type="entry name" value="rpsG_bact"/>
    <property type="match status" value="1"/>
</dbReference>
<dbReference type="PANTHER" id="PTHR11205">
    <property type="entry name" value="RIBOSOMAL PROTEIN S7"/>
    <property type="match status" value="1"/>
</dbReference>
<dbReference type="Pfam" id="PF00177">
    <property type="entry name" value="Ribosomal_S7"/>
    <property type="match status" value="1"/>
</dbReference>
<dbReference type="PIRSF" id="PIRSF002122">
    <property type="entry name" value="RPS7p_RPS7a_RPS5e_RPS7o"/>
    <property type="match status" value="1"/>
</dbReference>
<dbReference type="SUPFAM" id="SSF47973">
    <property type="entry name" value="Ribosomal protein S7"/>
    <property type="match status" value="1"/>
</dbReference>
<dbReference type="PROSITE" id="PS00052">
    <property type="entry name" value="RIBOSOMAL_S7"/>
    <property type="match status" value="1"/>
</dbReference>
<name>RS7_RALPJ</name>
<evidence type="ECO:0000255" key="1">
    <source>
        <dbReference type="HAMAP-Rule" id="MF_00480"/>
    </source>
</evidence>
<evidence type="ECO:0000305" key="2"/>